<protein>
    <recommendedName>
        <fullName evidence="1">Large-conductance mechanosensitive channel</fullName>
    </recommendedName>
</protein>
<keyword id="KW-0997">Cell inner membrane</keyword>
<keyword id="KW-1003">Cell membrane</keyword>
<keyword id="KW-0407">Ion channel</keyword>
<keyword id="KW-0406">Ion transport</keyword>
<keyword id="KW-0472">Membrane</keyword>
<keyword id="KW-1185">Reference proteome</keyword>
<keyword id="KW-0812">Transmembrane</keyword>
<keyword id="KW-1133">Transmembrane helix</keyword>
<keyword id="KW-0813">Transport</keyword>
<comment type="function">
    <text evidence="1">Channel that opens in response to stretch forces in the membrane lipid bilayer. May participate in the regulation of osmotic pressure changes within the cell.</text>
</comment>
<comment type="subunit">
    <text evidence="1">Homopentamer.</text>
</comment>
<comment type="subcellular location">
    <subcellularLocation>
        <location evidence="1">Cell inner membrane</location>
        <topology evidence="1">Multi-pass membrane protein</topology>
    </subcellularLocation>
</comment>
<comment type="similarity">
    <text evidence="1">Belongs to the MscL family.</text>
</comment>
<name>MSCL_RHIME</name>
<organism>
    <name type="scientific">Rhizobium meliloti (strain 1021)</name>
    <name type="common">Ensifer meliloti</name>
    <name type="synonym">Sinorhizobium meliloti</name>
    <dbReference type="NCBI Taxonomy" id="266834"/>
    <lineage>
        <taxon>Bacteria</taxon>
        <taxon>Pseudomonadati</taxon>
        <taxon>Pseudomonadota</taxon>
        <taxon>Alphaproteobacteria</taxon>
        <taxon>Hyphomicrobiales</taxon>
        <taxon>Rhizobiaceae</taxon>
        <taxon>Sinorhizobium/Ensifer group</taxon>
        <taxon>Sinorhizobium</taxon>
    </lineage>
</organism>
<dbReference type="EMBL" id="AL591688">
    <property type="protein sequence ID" value="CAC45126.1"/>
    <property type="molecule type" value="Genomic_DNA"/>
</dbReference>
<dbReference type="RefSeq" id="NP_384660.1">
    <property type="nucleotide sequence ID" value="NC_003047.1"/>
</dbReference>
<dbReference type="RefSeq" id="WP_010968654.1">
    <property type="nucleotide sequence ID" value="NC_003047.1"/>
</dbReference>
<dbReference type="EnsemblBacteria" id="CAC45126">
    <property type="protein sequence ID" value="CAC45126"/>
    <property type="gene ID" value="SMc02250"/>
</dbReference>
<dbReference type="KEGG" id="sme:SMc02250"/>
<dbReference type="PATRIC" id="fig|266834.11.peg.1929"/>
<dbReference type="eggNOG" id="COG1970">
    <property type="taxonomic scope" value="Bacteria"/>
</dbReference>
<dbReference type="HOGENOM" id="CLU_095787_0_1_5"/>
<dbReference type="OrthoDB" id="9810350at2"/>
<dbReference type="Proteomes" id="UP000001976">
    <property type="component" value="Chromosome"/>
</dbReference>
<dbReference type="GO" id="GO:0005886">
    <property type="term" value="C:plasma membrane"/>
    <property type="evidence" value="ECO:0007669"/>
    <property type="project" value="UniProtKB-SubCell"/>
</dbReference>
<dbReference type="GO" id="GO:0008381">
    <property type="term" value="F:mechanosensitive monoatomic ion channel activity"/>
    <property type="evidence" value="ECO:0007669"/>
    <property type="project" value="UniProtKB-UniRule"/>
</dbReference>
<dbReference type="Gene3D" id="1.10.1200.120">
    <property type="entry name" value="Large-conductance mechanosensitive channel, MscL, domain 1"/>
    <property type="match status" value="1"/>
</dbReference>
<dbReference type="HAMAP" id="MF_00115">
    <property type="entry name" value="MscL"/>
    <property type="match status" value="1"/>
</dbReference>
<dbReference type="InterPro" id="IPR019823">
    <property type="entry name" value="Mechanosensitive_channel_CS"/>
</dbReference>
<dbReference type="InterPro" id="IPR001185">
    <property type="entry name" value="MS_channel"/>
</dbReference>
<dbReference type="InterPro" id="IPR037673">
    <property type="entry name" value="MSC/AndL"/>
</dbReference>
<dbReference type="InterPro" id="IPR036019">
    <property type="entry name" value="MscL_channel"/>
</dbReference>
<dbReference type="NCBIfam" id="TIGR00220">
    <property type="entry name" value="mscL"/>
    <property type="match status" value="1"/>
</dbReference>
<dbReference type="NCBIfam" id="NF010557">
    <property type="entry name" value="PRK13952.1"/>
    <property type="match status" value="1"/>
</dbReference>
<dbReference type="PANTHER" id="PTHR30266:SF2">
    <property type="entry name" value="LARGE-CONDUCTANCE MECHANOSENSITIVE CHANNEL"/>
    <property type="match status" value="1"/>
</dbReference>
<dbReference type="PANTHER" id="PTHR30266">
    <property type="entry name" value="MECHANOSENSITIVE CHANNEL MSCL"/>
    <property type="match status" value="1"/>
</dbReference>
<dbReference type="Pfam" id="PF01741">
    <property type="entry name" value="MscL"/>
    <property type="match status" value="1"/>
</dbReference>
<dbReference type="PRINTS" id="PR01264">
    <property type="entry name" value="MECHCHANNEL"/>
</dbReference>
<dbReference type="SUPFAM" id="SSF81330">
    <property type="entry name" value="Gated mechanosensitive channel"/>
    <property type="match status" value="1"/>
</dbReference>
<dbReference type="PROSITE" id="PS01327">
    <property type="entry name" value="MSCL"/>
    <property type="match status" value="1"/>
</dbReference>
<sequence>MLNEFKEFIARGNVMDLAVGVIIGAAFSKIVDSVVNDLVMPVVGAITGGGFDFSNYFLPLSASVTAPTLSAAREQGAVFAYGNFITVLINFLILAWIIFLLIKLVNRARASVERDKAPDPAAPPPQDILLLSEIRDLLRQRA</sequence>
<evidence type="ECO:0000255" key="1">
    <source>
        <dbReference type="HAMAP-Rule" id="MF_00115"/>
    </source>
</evidence>
<feature type="chain" id="PRO_0000238028" description="Large-conductance mechanosensitive channel">
    <location>
        <begin position="1"/>
        <end position="142"/>
    </location>
</feature>
<feature type="transmembrane region" description="Helical" evidence="1">
    <location>
        <begin position="14"/>
        <end position="34"/>
    </location>
</feature>
<feature type="transmembrane region" description="Helical" evidence="1">
    <location>
        <begin position="38"/>
        <end position="58"/>
    </location>
</feature>
<feature type="transmembrane region" description="Helical" evidence="1">
    <location>
        <begin position="82"/>
        <end position="102"/>
    </location>
</feature>
<accession>Q92S72</accession>
<gene>
    <name evidence="1" type="primary">mscL</name>
    <name type="ordered locus">R00554</name>
    <name type="ORF">SMc02250</name>
</gene>
<proteinExistence type="inferred from homology"/>
<reference key="1">
    <citation type="journal article" date="2001" name="Proc. Natl. Acad. Sci. U.S.A.">
        <title>Analysis of the chromosome sequence of the legume symbiont Sinorhizobium meliloti strain 1021.</title>
        <authorList>
            <person name="Capela D."/>
            <person name="Barloy-Hubler F."/>
            <person name="Gouzy J."/>
            <person name="Bothe G."/>
            <person name="Ampe F."/>
            <person name="Batut J."/>
            <person name="Boistard P."/>
            <person name="Becker A."/>
            <person name="Boutry M."/>
            <person name="Cadieu E."/>
            <person name="Dreano S."/>
            <person name="Gloux S."/>
            <person name="Godrie T."/>
            <person name="Goffeau A."/>
            <person name="Kahn D."/>
            <person name="Kiss E."/>
            <person name="Lelaure V."/>
            <person name="Masuy D."/>
            <person name="Pohl T."/>
            <person name="Portetelle D."/>
            <person name="Puehler A."/>
            <person name="Purnelle B."/>
            <person name="Ramsperger U."/>
            <person name="Renard C."/>
            <person name="Thebault P."/>
            <person name="Vandenbol M."/>
            <person name="Weidner S."/>
            <person name="Galibert F."/>
        </authorList>
    </citation>
    <scope>NUCLEOTIDE SEQUENCE [LARGE SCALE GENOMIC DNA]</scope>
    <source>
        <strain>1021</strain>
    </source>
</reference>
<reference key="2">
    <citation type="journal article" date="2001" name="Science">
        <title>The composite genome of the legume symbiont Sinorhizobium meliloti.</title>
        <authorList>
            <person name="Galibert F."/>
            <person name="Finan T.M."/>
            <person name="Long S.R."/>
            <person name="Puehler A."/>
            <person name="Abola P."/>
            <person name="Ampe F."/>
            <person name="Barloy-Hubler F."/>
            <person name="Barnett M.J."/>
            <person name="Becker A."/>
            <person name="Boistard P."/>
            <person name="Bothe G."/>
            <person name="Boutry M."/>
            <person name="Bowser L."/>
            <person name="Buhrmester J."/>
            <person name="Cadieu E."/>
            <person name="Capela D."/>
            <person name="Chain P."/>
            <person name="Cowie A."/>
            <person name="Davis R.W."/>
            <person name="Dreano S."/>
            <person name="Federspiel N.A."/>
            <person name="Fisher R.F."/>
            <person name="Gloux S."/>
            <person name="Godrie T."/>
            <person name="Goffeau A."/>
            <person name="Golding B."/>
            <person name="Gouzy J."/>
            <person name="Gurjal M."/>
            <person name="Hernandez-Lucas I."/>
            <person name="Hong A."/>
            <person name="Huizar L."/>
            <person name="Hyman R.W."/>
            <person name="Jones T."/>
            <person name="Kahn D."/>
            <person name="Kahn M.L."/>
            <person name="Kalman S."/>
            <person name="Keating D.H."/>
            <person name="Kiss E."/>
            <person name="Komp C."/>
            <person name="Lelaure V."/>
            <person name="Masuy D."/>
            <person name="Palm C."/>
            <person name="Peck M.C."/>
            <person name="Pohl T.M."/>
            <person name="Portetelle D."/>
            <person name="Purnelle B."/>
            <person name="Ramsperger U."/>
            <person name="Surzycki R."/>
            <person name="Thebault P."/>
            <person name="Vandenbol M."/>
            <person name="Vorhoelter F.J."/>
            <person name="Weidner S."/>
            <person name="Wells D.H."/>
            <person name="Wong K."/>
            <person name="Yeh K.-C."/>
            <person name="Batut J."/>
        </authorList>
    </citation>
    <scope>NUCLEOTIDE SEQUENCE [LARGE SCALE GENOMIC DNA]</scope>
    <source>
        <strain>1021</strain>
    </source>
</reference>